<protein>
    <recommendedName>
        <fullName>Cation/H(+) antiporter 24</fullName>
    </recommendedName>
    <alternativeName>
        <fullName>Protein CATION/H+ EXCHANGER 24</fullName>
        <shortName>AtCHX24</shortName>
    </alternativeName>
</protein>
<dbReference type="EMBL" id="AB017068">
    <property type="protein sequence ID" value="BAB11358.1"/>
    <property type="status" value="ALT_SEQ"/>
    <property type="molecule type" value="Genomic_DNA"/>
</dbReference>
<dbReference type="EMBL" id="CP002688">
    <property type="protein sequence ID" value="AED94143.1"/>
    <property type="molecule type" value="Genomic_DNA"/>
</dbReference>
<dbReference type="EMBL" id="DQ499022">
    <property type="protein sequence ID" value="ABF54932.1"/>
    <property type="molecule type" value="mRNA"/>
</dbReference>
<dbReference type="RefSeq" id="NP_198522.1">
    <property type="nucleotide sequence ID" value="NM_123065.2"/>
</dbReference>
<dbReference type="SMR" id="Q1HDT2"/>
<dbReference type="BioGRID" id="18928">
    <property type="interactions" value="14"/>
</dbReference>
<dbReference type="IntAct" id="Q1HDT2">
    <property type="interactions" value="14"/>
</dbReference>
<dbReference type="STRING" id="3702.Q1HDT2"/>
<dbReference type="SwissPalm" id="Q1HDT2"/>
<dbReference type="PaxDb" id="3702-AT5G37060.1"/>
<dbReference type="ProteomicsDB" id="246883"/>
<dbReference type="EnsemblPlants" id="AT5G37060.1">
    <property type="protein sequence ID" value="AT5G37060.1"/>
    <property type="gene ID" value="AT5G37060"/>
</dbReference>
<dbReference type="GeneID" id="833677"/>
<dbReference type="Gramene" id="AT5G37060.1">
    <property type="protein sequence ID" value="AT5G37060.1"/>
    <property type="gene ID" value="AT5G37060"/>
</dbReference>
<dbReference type="KEGG" id="ath:AT5G37060"/>
<dbReference type="Araport" id="AT5G37060"/>
<dbReference type="TAIR" id="AT5G37060">
    <property type="gene designation" value="CHX24"/>
</dbReference>
<dbReference type="eggNOG" id="KOG1650">
    <property type="taxonomic scope" value="Eukaryota"/>
</dbReference>
<dbReference type="HOGENOM" id="CLU_005126_6_2_1"/>
<dbReference type="InParanoid" id="Q1HDT2"/>
<dbReference type="OMA" id="GWHRPAF"/>
<dbReference type="PhylomeDB" id="Q1HDT2"/>
<dbReference type="PRO" id="PR:Q1HDT2"/>
<dbReference type="Proteomes" id="UP000006548">
    <property type="component" value="Chromosome 5"/>
</dbReference>
<dbReference type="ExpressionAtlas" id="Q1HDT2">
    <property type="expression patterns" value="baseline and differential"/>
</dbReference>
<dbReference type="GO" id="GO:0016020">
    <property type="term" value="C:membrane"/>
    <property type="evidence" value="ECO:0007669"/>
    <property type="project" value="UniProtKB-SubCell"/>
</dbReference>
<dbReference type="GO" id="GO:0015297">
    <property type="term" value="F:antiporter activity"/>
    <property type="evidence" value="ECO:0007669"/>
    <property type="project" value="UniProtKB-KW"/>
</dbReference>
<dbReference type="GO" id="GO:0006813">
    <property type="term" value="P:potassium ion transport"/>
    <property type="evidence" value="ECO:0007669"/>
    <property type="project" value="UniProtKB-KW"/>
</dbReference>
<dbReference type="GO" id="GO:1902600">
    <property type="term" value="P:proton transmembrane transport"/>
    <property type="evidence" value="ECO:0007669"/>
    <property type="project" value="InterPro"/>
</dbReference>
<dbReference type="FunFam" id="1.20.1530.20:FF:000022">
    <property type="entry name" value="Cation/H(+) antiporter 24"/>
    <property type="match status" value="1"/>
</dbReference>
<dbReference type="Gene3D" id="1.20.1530.20">
    <property type="match status" value="1"/>
</dbReference>
<dbReference type="InterPro" id="IPR006153">
    <property type="entry name" value="Cation/H_exchanger_TM"/>
</dbReference>
<dbReference type="InterPro" id="IPR050794">
    <property type="entry name" value="CPA2_transporter"/>
</dbReference>
<dbReference type="InterPro" id="IPR038770">
    <property type="entry name" value="Na+/solute_symporter_sf"/>
</dbReference>
<dbReference type="PANTHER" id="PTHR32468">
    <property type="entry name" value="CATION/H + ANTIPORTER"/>
    <property type="match status" value="1"/>
</dbReference>
<dbReference type="PANTHER" id="PTHR32468:SF109">
    <property type="entry name" value="CATION_H(+) ANTIPORTER 24-RELATED"/>
    <property type="match status" value="1"/>
</dbReference>
<dbReference type="Pfam" id="PF23256">
    <property type="entry name" value="CHX17_2nd"/>
    <property type="match status" value="1"/>
</dbReference>
<dbReference type="Pfam" id="PF00999">
    <property type="entry name" value="Na_H_Exchanger"/>
    <property type="match status" value="1"/>
</dbReference>
<accession>Q1HDT2</accession>
<accession>Q9FHW1</accession>
<feature type="chain" id="PRO_0000394993" description="Cation/H(+) antiporter 24">
    <location>
        <begin position="1"/>
        <end position="859"/>
    </location>
</feature>
<feature type="transmembrane region" description="Helical" evidence="3">
    <location>
        <begin position="64"/>
        <end position="84"/>
    </location>
</feature>
<feature type="transmembrane region" description="Helical" evidence="3">
    <location>
        <begin position="92"/>
        <end position="112"/>
    </location>
</feature>
<feature type="transmembrane region" description="Helical" evidence="3">
    <location>
        <begin position="122"/>
        <end position="142"/>
    </location>
</feature>
<feature type="transmembrane region" description="Helical" evidence="3">
    <location>
        <begin position="161"/>
        <end position="181"/>
    </location>
</feature>
<feature type="transmembrane region" description="Helical" evidence="3">
    <location>
        <begin position="194"/>
        <end position="214"/>
    </location>
</feature>
<feature type="transmembrane region" description="Helical" evidence="3">
    <location>
        <begin position="227"/>
        <end position="247"/>
    </location>
</feature>
<feature type="transmembrane region" description="Helical" evidence="3">
    <location>
        <begin position="258"/>
        <end position="278"/>
    </location>
</feature>
<feature type="transmembrane region" description="Helical" evidence="3">
    <location>
        <begin position="291"/>
        <end position="311"/>
    </location>
</feature>
<feature type="transmembrane region" description="Helical" evidence="3">
    <location>
        <begin position="312"/>
        <end position="332"/>
    </location>
</feature>
<feature type="transmembrane region" description="Helical" evidence="3">
    <location>
        <begin position="348"/>
        <end position="368"/>
    </location>
</feature>
<feature type="transmembrane region" description="Helical" evidence="3">
    <location>
        <begin position="384"/>
        <end position="404"/>
    </location>
</feature>
<feature type="transmembrane region" description="Helical" evidence="3">
    <location>
        <begin position="438"/>
        <end position="458"/>
    </location>
</feature>
<feature type="region of interest" description="Disordered" evidence="4">
    <location>
        <begin position="538"/>
        <end position="566"/>
    </location>
</feature>
<feature type="compositionally biased region" description="Acidic residues" evidence="4">
    <location>
        <begin position="546"/>
        <end position="557"/>
    </location>
</feature>
<feature type="modified residue" description="Phosphoserine" evidence="2">
    <location>
        <position position="857"/>
    </location>
</feature>
<sequence>MVRHFPINDQSLLPAHFGFWPGNSTTPGEVSNRVFSPKIPVVCRKLHSKQPFGMFKGENAMNYAFSTFLIEAIIIIFFIKVVSIALRPFRQPRIVSEIIGGMMIGPSMFGGIRNFNYYLFPPIANYICANIGLMGFFYFLFLTAAKTDVGAIGKAPRKHKYIAAIGVIVPIICVGSVGMAMRDQMDENLQKPSSIGGVVFALSFTSFPVIYTVLRDMNLLNSEVGKFAMSVALLGDMAGVYVIVIFEAMTHADVGGAYSVFWFLVSVVIFAAFMLLVVRRAFDWIVSQTPEGTLVNQNYIVMILMGVLASCFLTDMFGLSIAVGPIWLGLLVPHGPPLGSTLAVRSETFIYEFLMPFTYALVGQGTNIHFLRDETWRNQLSPLFYMTVVGFITKFLSTAFAALFFKVPARESITLGLMMNLRGQMDLLVYLHWIDKRIVGFPGYTVMVLHTVVVTAVTTPLINFFYDPTRPYRSSKHRTIQHTPQNTEMGLVLAVSDHETLSGLITFLDFAYPTKSSPLSIFAVQLVELAGRATPLFIDHEQRKEEEEEEYEEEEEEPERKQSGRIDQVQSAFKLYEEKRNECVTLRSYTAHAPKRLMYQDICELALGKKTAFILLPYQKERLEDAAPTELRDSGMLSVNADVLEHTPCSVCIYFDKGRLKNAVVRLSMDLQHSTNSIRMRQETYRFVVLFLGGADNREALHLADRMSTNPDVTLTVIRFLSYNHEGEDEREKKLDDGVVTWFWVKNESNERVSYKEVVVKNGAETLAAIQAMNVNDYDLWITGRREGINPKILEGLSTWSEDHQLGVIGDTVAASVFASEGSVLVVQQQVRNQKGGDGFLNGKFDYKRFLSPWSHSHN</sequence>
<comment type="function">
    <text evidence="1">May operate as a cation/H(+) antiporter.</text>
</comment>
<comment type="subcellular location">
    <subcellularLocation>
        <location evidence="1">Membrane</location>
        <topology evidence="1">Multi-pass membrane protein</topology>
    </subcellularLocation>
</comment>
<comment type="tissue specificity">
    <text evidence="5">Specifically expressed in pollen.</text>
</comment>
<comment type="similarity">
    <text evidence="6">Belongs to the monovalent cation:proton antiporter 2 (CPA2) transporter (TC 2.A.37) family. CHX (TC 2.A.37.4) subfamily.</text>
</comment>
<comment type="sequence caution" evidence="6">
    <conflict type="erroneous gene model prediction">
        <sequence resource="EMBL-CDS" id="BAB11358"/>
    </conflict>
</comment>
<reference key="1">
    <citation type="journal article" date="1999" name="DNA Res.">
        <title>Structural analysis of Arabidopsis thaliana chromosome 5. IX. Sequence features of the regions of 1,011,550 bp covered by seventeen P1 and TAC clones.</title>
        <authorList>
            <person name="Kaneko T."/>
            <person name="Katoh T."/>
            <person name="Sato S."/>
            <person name="Nakamura Y."/>
            <person name="Asamizu E."/>
            <person name="Kotani H."/>
            <person name="Miyajima N."/>
            <person name="Tabata S."/>
        </authorList>
    </citation>
    <scope>NUCLEOTIDE SEQUENCE [LARGE SCALE GENOMIC DNA]</scope>
    <source>
        <strain>cv. Columbia</strain>
    </source>
</reference>
<reference key="2">
    <citation type="journal article" date="2017" name="Plant J.">
        <title>Araport11: a complete reannotation of the Arabidopsis thaliana reference genome.</title>
        <authorList>
            <person name="Cheng C.Y."/>
            <person name="Krishnakumar V."/>
            <person name="Chan A.P."/>
            <person name="Thibaud-Nissen F."/>
            <person name="Schobel S."/>
            <person name="Town C.D."/>
        </authorList>
    </citation>
    <scope>GENOME REANNOTATION</scope>
    <source>
        <strain>cv. Columbia</strain>
    </source>
</reference>
<reference key="3">
    <citation type="journal article" date="2004" name="Plant Physiol.">
        <title>Expression patterns of a novel AtCHX gene family highlight potential roles in osmotic adjustment and K+ homeostasis in pollen development.</title>
        <authorList>
            <person name="Sze H."/>
            <person name="Padmanaban S."/>
            <person name="Cellier F."/>
            <person name="Honys D."/>
            <person name="Cheng N.-H."/>
            <person name="Bock K.W."/>
            <person name="Conejero G."/>
            <person name="Li X."/>
            <person name="Twell D."/>
            <person name="Ward J.M."/>
            <person name="Hirschi K.D."/>
        </authorList>
    </citation>
    <scope>NUCLEOTIDE SEQUENCE [MRNA] OF 1-856</scope>
    <scope>TISSUE SPECIFICITY</scope>
    <scope>GENE FAMILY</scope>
    <scope>NOMENCLATURE</scope>
    <source>
        <tissue>Pollen</tissue>
    </source>
</reference>
<reference key="4">
    <citation type="journal article" date="2001" name="Plant Physiol.">
        <title>Phylogenetic relationships within cation transporter families of Arabidopsis.</title>
        <authorList>
            <person name="Maeser P."/>
            <person name="Thomine S."/>
            <person name="Schroeder J.I."/>
            <person name="Ward J.M."/>
            <person name="Hirschi K."/>
            <person name="Sze H."/>
            <person name="Talke I.N."/>
            <person name="Amtmann A."/>
            <person name="Maathuis F.J.M."/>
            <person name="Sanders D."/>
            <person name="Harper J.F."/>
            <person name="Tchieu J."/>
            <person name="Gribskov M."/>
            <person name="Persans M.W."/>
            <person name="Salt D.E."/>
            <person name="Kim S.A."/>
            <person name="Guerinot M.L."/>
        </authorList>
    </citation>
    <scope>GENE FAMILY</scope>
    <scope>NOMENCLATURE</scope>
</reference>
<proteinExistence type="evidence at transcript level"/>
<evidence type="ECO:0000250" key="1"/>
<evidence type="ECO:0000250" key="2">
    <source>
        <dbReference type="UniProtKB" id="Q9SUQ7"/>
    </source>
</evidence>
<evidence type="ECO:0000255" key="3"/>
<evidence type="ECO:0000256" key="4">
    <source>
        <dbReference type="SAM" id="MobiDB-lite"/>
    </source>
</evidence>
<evidence type="ECO:0000269" key="5">
    <source>
    </source>
</evidence>
<evidence type="ECO:0000305" key="6"/>
<keyword id="KW-0050">Antiport</keyword>
<keyword id="KW-0406">Ion transport</keyword>
<keyword id="KW-0472">Membrane</keyword>
<keyword id="KW-0597">Phosphoprotein</keyword>
<keyword id="KW-0630">Potassium</keyword>
<keyword id="KW-0633">Potassium transport</keyword>
<keyword id="KW-1185">Reference proteome</keyword>
<keyword id="KW-0812">Transmembrane</keyword>
<keyword id="KW-1133">Transmembrane helix</keyword>
<keyword id="KW-0813">Transport</keyword>
<organism>
    <name type="scientific">Arabidopsis thaliana</name>
    <name type="common">Mouse-ear cress</name>
    <dbReference type="NCBI Taxonomy" id="3702"/>
    <lineage>
        <taxon>Eukaryota</taxon>
        <taxon>Viridiplantae</taxon>
        <taxon>Streptophyta</taxon>
        <taxon>Embryophyta</taxon>
        <taxon>Tracheophyta</taxon>
        <taxon>Spermatophyta</taxon>
        <taxon>Magnoliopsida</taxon>
        <taxon>eudicotyledons</taxon>
        <taxon>Gunneridae</taxon>
        <taxon>Pentapetalae</taxon>
        <taxon>rosids</taxon>
        <taxon>malvids</taxon>
        <taxon>Brassicales</taxon>
        <taxon>Brassicaceae</taxon>
        <taxon>Camelineae</taxon>
        <taxon>Arabidopsis</taxon>
    </lineage>
</organism>
<name>CHX24_ARATH</name>
<gene>
    <name type="primary">CHX24</name>
    <name type="ordered locus">At5g37060</name>
    <name type="ORF">MJG14.5</name>
</gene>